<dbReference type="EC" id="7.1.2.2" evidence="1"/>
<dbReference type="EMBL" id="BA000004">
    <property type="protein sequence ID" value="BAB07475.1"/>
    <property type="molecule type" value="Genomic_DNA"/>
</dbReference>
<dbReference type="PIR" id="D84119">
    <property type="entry name" value="D84119"/>
</dbReference>
<dbReference type="RefSeq" id="WP_010899881.1">
    <property type="nucleotide sequence ID" value="NC_002570.2"/>
</dbReference>
<dbReference type="SMR" id="Q9K6H3"/>
<dbReference type="STRING" id="272558.gene:10729669"/>
<dbReference type="GeneID" id="87599303"/>
<dbReference type="KEGG" id="bha:BH3756"/>
<dbReference type="eggNOG" id="COG0056">
    <property type="taxonomic scope" value="Bacteria"/>
</dbReference>
<dbReference type="HOGENOM" id="CLU_010091_2_1_9"/>
<dbReference type="OrthoDB" id="9803053at2"/>
<dbReference type="Proteomes" id="UP000001258">
    <property type="component" value="Chromosome"/>
</dbReference>
<dbReference type="GO" id="GO:0005886">
    <property type="term" value="C:plasma membrane"/>
    <property type="evidence" value="ECO:0007669"/>
    <property type="project" value="UniProtKB-SubCell"/>
</dbReference>
<dbReference type="GO" id="GO:0045259">
    <property type="term" value="C:proton-transporting ATP synthase complex"/>
    <property type="evidence" value="ECO:0007669"/>
    <property type="project" value="UniProtKB-KW"/>
</dbReference>
<dbReference type="GO" id="GO:0043531">
    <property type="term" value="F:ADP binding"/>
    <property type="evidence" value="ECO:0007669"/>
    <property type="project" value="TreeGrafter"/>
</dbReference>
<dbReference type="GO" id="GO:0005524">
    <property type="term" value="F:ATP binding"/>
    <property type="evidence" value="ECO:0007669"/>
    <property type="project" value="UniProtKB-UniRule"/>
</dbReference>
<dbReference type="GO" id="GO:0046933">
    <property type="term" value="F:proton-transporting ATP synthase activity, rotational mechanism"/>
    <property type="evidence" value="ECO:0007669"/>
    <property type="project" value="UniProtKB-UniRule"/>
</dbReference>
<dbReference type="CDD" id="cd18113">
    <property type="entry name" value="ATP-synt_F1_alpha_C"/>
    <property type="match status" value="1"/>
</dbReference>
<dbReference type="CDD" id="cd18116">
    <property type="entry name" value="ATP-synt_F1_alpha_N"/>
    <property type="match status" value="1"/>
</dbReference>
<dbReference type="CDD" id="cd01132">
    <property type="entry name" value="F1-ATPase_alpha_CD"/>
    <property type="match status" value="1"/>
</dbReference>
<dbReference type="FunFam" id="1.20.150.20:FF:000001">
    <property type="entry name" value="ATP synthase subunit alpha"/>
    <property type="match status" value="1"/>
</dbReference>
<dbReference type="FunFam" id="2.40.30.20:FF:000001">
    <property type="entry name" value="ATP synthase subunit alpha"/>
    <property type="match status" value="1"/>
</dbReference>
<dbReference type="FunFam" id="3.40.50.300:FF:000002">
    <property type="entry name" value="ATP synthase subunit alpha"/>
    <property type="match status" value="1"/>
</dbReference>
<dbReference type="Gene3D" id="2.40.30.20">
    <property type="match status" value="1"/>
</dbReference>
<dbReference type="Gene3D" id="1.20.150.20">
    <property type="entry name" value="ATP synthase alpha/beta chain, C-terminal domain"/>
    <property type="match status" value="1"/>
</dbReference>
<dbReference type="Gene3D" id="3.40.50.300">
    <property type="entry name" value="P-loop containing nucleotide triphosphate hydrolases"/>
    <property type="match status" value="1"/>
</dbReference>
<dbReference type="HAMAP" id="MF_01346">
    <property type="entry name" value="ATP_synth_alpha_bact"/>
    <property type="match status" value="1"/>
</dbReference>
<dbReference type="InterPro" id="IPR023366">
    <property type="entry name" value="ATP_synth_asu-like_sf"/>
</dbReference>
<dbReference type="InterPro" id="IPR000793">
    <property type="entry name" value="ATP_synth_asu_C"/>
</dbReference>
<dbReference type="InterPro" id="IPR038376">
    <property type="entry name" value="ATP_synth_asu_C_sf"/>
</dbReference>
<dbReference type="InterPro" id="IPR033732">
    <property type="entry name" value="ATP_synth_F1_a_nt-bd_dom"/>
</dbReference>
<dbReference type="InterPro" id="IPR005294">
    <property type="entry name" value="ATP_synth_F1_asu"/>
</dbReference>
<dbReference type="InterPro" id="IPR020003">
    <property type="entry name" value="ATPase_a/bsu_AS"/>
</dbReference>
<dbReference type="InterPro" id="IPR004100">
    <property type="entry name" value="ATPase_F1/V1/A1_a/bsu_N"/>
</dbReference>
<dbReference type="InterPro" id="IPR036121">
    <property type="entry name" value="ATPase_F1/V1/A1_a/bsu_N_sf"/>
</dbReference>
<dbReference type="InterPro" id="IPR000194">
    <property type="entry name" value="ATPase_F1/V1/A1_a/bsu_nucl-bd"/>
</dbReference>
<dbReference type="InterPro" id="IPR027417">
    <property type="entry name" value="P-loop_NTPase"/>
</dbReference>
<dbReference type="NCBIfam" id="TIGR00962">
    <property type="entry name" value="atpA"/>
    <property type="match status" value="1"/>
</dbReference>
<dbReference type="NCBIfam" id="NF009884">
    <property type="entry name" value="PRK13343.1"/>
    <property type="match status" value="1"/>
</dbReference>
<dbReference type="PANTHER" id="PTHR48082">
    <property type="entry name" value="ATP SYNTHASE SUBUNIT ALPHA, MITOCHONDRIAL"/>
    <property type="match status" value="1"/>
</dbReference>
<dbReference type="PANTHER" id="PTHR48082:SF2">
    <property type="entry name" value="ATP SYNTHASE SUBUNIT ALPHA, MITOCHONDRIAL"/>
    <property type="match status" value="1"/>
</dbReference>
<dbReference type="Pfam" id="PF00006">
    <property type="entry name" value="ATP-synt_ab"/>
    <property type="match status" value="1"/>
</dbReference>
<dbReference type="Pfam" id="PF00306">
    <property type="entry name" value="ATP-synt_ab_C"/>
    <property type="match status" value="1"/>
</dbReference>
<dbReference type="Pfam" id="PF02874">
    <property type="entry name" value="ATP-synt_ab_N"/>
    <property type="match status" value="1"/>
</dbReference>
<dbReference type="PIRSF" id="PIRSF039088">
    <property type="entry name" value="F_ATPase_subunit_alpha"/>
    <property type="match status" value="1"/>
</dbReference>
<dbReference type="SUPFAM" id="SSF47917">
    <property type="entry name" value="C-terminal domain of alpha and beta subunits of F1 ATP synthase"/>
    <property type="match status" value="1"/>
</dbReference>
<dbReference type="SUPFAM" id="SSF50615">
    <property type="entry name" value="N-terminal domain of alpha and beta subunits of F1 ATP synthase"/>
    <property type="match status" value="1"/>
</dbReference>
<dbReference type="SUPFAM" id="SSF52540">
    <property type="entry name" value="P-loop containing nucleoside triphosphate hydrolases"/>
    <property type="match status" value="1"/>
</dbReference>
<dbReference type="PROSITE" id="PS00152">
    <property type="entry name" value="ATPASE_ALPHA_BETA"/>
    <property type="match status" value="1"/>
</dbReference>
<proteinExistence type="inferred from homology"/>
<keyword id="KW-0066">ATP synthesis</keyword>
<keyword id="KW-0067">ATP-binding</keyword>
<keyword id="KW-1003">Cell membrane</keyword>
<keyword id="KW-0139">CF(1)</keyword>
<keyword id="KW-0375">Hydrogen ion transport</keyword>
<keyword id="KW-0406">Ion transport</keyword>
<keyword id="KW-0472">Membrane</keyword>
<keyword id="KW-0547">Nucleotide-binding</keyword>
<keyword id="KW-1185">Reference proteome</keyword>
<keyword id="KW-1278">Translocase</keyword>
<keyword id="KW-0813">Transport</keyword>
<name>ATPA_HALH5</name>
<evidence type="ECO:0000255" key="1">
    <source>
        <dbReference type="HAMAP-Rule" id="MF_01346"/>
    </source>
</evidence>
<evidence type="ECO:0000256" key="2">
    <source>
        <dbReference type="SAM" id="MobiDB-lite"/>
    </source>
</evidence>
<protein>
    <recommendedName>
        <fullName evidence="1">ATP synthase subunit alpha</fullName>
        <ecNumber evidence="1">7.1.2.2</ecNumber>
    </recommendedName>
    <alternativeName>
        <fullName evidence="1">ATP synthase F1 sector subunit alpha</fullName>
    </alternativeName>
    <alternativeName>
        <fullName evidence="1">F-ATPase subunit alpha</fullName>
    </alternativeName>
</protein>
<comment type="function">
    <text evidence="1">Produces ATP from ADP in the presence of a proton gradient across the membrane. The alpha chain is a regulatory subunit.</text>
</comment>
<comment type="catalytic activity">
    <reaction evidence="1">
        <text>ATP + H2O + 4 H(+)(in) = ADP + phosphate + 5 H(+)(out)</text>
        <dbReference type="Rhea" id="RHEA:57720"/>
        <dbReference type="ChEBI" id="CHEBI:15377"/>
        <dbReference type="ChEBI" id="CHEBI:15378"/>
        <dbReference type="ChEBI" id="CHEBI:30616"/>
        <dbReference type="ChEBI" id="CHEBI:43474"/>
        <dbReference type="ChEBI" id="CHEBI:456216"/>
        <dbReference type="EC" id="7.1.2.2"/>
    </reaction>
</comment>
<comment type="subunit">
    <text evidence="1">F-type ATPases have 2 components, CF(1) - the catalytic core - and CF(0) - the membrane proton channel. CF(1) has five subunits: alpha(3), beta(3), gamma(1), delta(1), epsilon(1). CF(0) has three main subunits: a(1), b(2) and c(9-12). The alpha and beta chains form an alternating ring which encloses part of the gamma chain. CF(1) is attached to CF(0) by a central stalk formed by the gamma and epsilon chains, while a peripheral stalk is formed by the delta and b chains.</text>
</comment>
<comment type="subcellular location">
    <subcellularLocation>
        <location evidence="1">Cell membrane</location>
        <topology evidence="1">Peripheral membrane protein</topology>
    </subcellularLocation>
</comment>
<comment type="similarity">
    <text evidence="1">Belongs to the ATPase alpha/beta chains family.</text>
</comment>
<feature type="chain" id="PRO_0000144314" description="ATP synthase subunit alpha">
    <location>
        <begin position="1"/>
        <end position="502"/>
    </location>
</feature>
<feature type="region of interest" description="Disordered" evidence="2">
    <location>
        <begin position="114"/>
        <end position="139"/>
    </location>
</feature>
<feature type="binding site" evidence="1">
    <location>
        <begin position="169"/>
        <end position="176"/>
    </location>
    <ligand>
        <name>ATP</name>
        <dbReference type="ChEBI" id="CHEBI:30616"/>
    </ligand>
</feature>
<feature type="site" description="Required for activity" evidence="1">
    <location>
        <position position="362"/>
    </location>
</feature>
<sequence length="502" mass="54645">MSIKPEEISSLIKQQIENFQSDVQVQDVGTVIRVGDGIALAHGLESVMAGELLEFSNGVMGMAQNLEENNVGIIILGPYSEIREGDEVKRTGRIMEVPVGEELLGRVVNPLGQPIDGRGPIETSKTRPIESPAPGVMDRKSVHEPLQTGIKSIDSMIPVGRGQRELIIGDRQTGKTSIAIDTIINQKDQDMICIYVAIGQKESTVAGVVETLRQHGALDYTIVVSASASEPAPLLFLAPYAGVSMGEEFMYNGKHVLVVYDDLTKQAAAYRELSLLLRRPPGREAYPGDVFYLHSRLLERAAKLSDAKGGGSITALPFIETQAGDVSAYIPTNVISITDGQIFLQSDLFYSGVRPAVNAGLSVSRVGGSAQIKAMKKVSGTLRLDLAAYRELEAFAQFGSDLDKATQAKLNRGQRTVEVLKQGLHEPLPVEKQVAIIYALINGFLDDIPVGDVRRFESELFTFLDHNKKELLDHIRTTGNLPDDSEFKAAITEFKQGFVTTK</sequence>
<accession>Q9K6H3</accession>
<organism>
    <name type="scientific">Halalkalibacterium halodurans (strain ATCC BAA-125 / DSM 18197 / FERM 7344 / JCM 9153 / C-125)</name>
    <name type="common">Bacillus halodurans</name>
    <dbReference type="NCBI Taxonomy" id="272558"/>
    <lineage>
        <taxon>Bacteria</taxon>
        <taxon>Bacillati</taxon>
        <taxon>Bacillota</taxon>
        <taxon>Bacilli</taxon>
        <taxon>Bacillales</taxon>
        <taxon>Bacillaceae</taxon>
        <taxon>Halalkalibacterium (ex Joshi et al. 2022)</taxon>
    </lineage>
</organism>
<reference key="1">
    <citation type="journal article" date="2000" name="Nucleic Acids Res.">
        <title>Complete genome sequence of the alkaliphilic bacterium Bacillus halodurans and genomic sequence comparison with Bacillus subtilis.</title>
        <authorList>
            <person name="Takami H."/>
            <person name="Nakasone K."/>
            <person name="Takaki Y."/>
            <person name="Maeno G."/>
            <person name="Sasaki R."/>
            <person name="Masui N."/>
            <person name="Fuji F."/>
            <person name="Hirama C."/>
            <person name="Nakamura Y."/>
            <person name="Ogasawara N."/>
            <person name="Kuhara S."/>
            <person name="Horikoshi K."/>
        </authorList>
    </citation>
    <scope>NUCLEOTIDE SEQUENCE [LARGE SCALE GENOMIC DNA]</scope>
    <source>
        <strain>ATCC BAA-125 / DSM 18197 / FERM 7344 / JCM 9153 / C-125</strain>
    </source>
</reference>
<gene>
    <name evidence="1" type="primary">atpA</name>
    <name type="ordered locus">BH3756</name>
</gene>